<organism>
    <name type="scientific">Neisseria meningitidis serogroup B (strain ATCC BAA-335 / MC58)</name>
    <dbReference type="NCBI Taxonomy" id="122586"/>
    <lineage>
        <taxon>Bacteria</taxon>
        <taxon>Pseudomonadati</taxon>
        <taxon>Pseudomonadota</taxon>
        <taxon>Betaproteobacteria</taxon>
        <taxon>Neisseriales</taxon>
        <taxon>Neisseriaceae</taxon>
        <taxon>Neisseria</taxon>
    </lineage>
</organism>
<reference key="1">
    <citation type="journal article" date="2000" name="Science">
        <title>Complete genome sequence of Neisseria meningitidis serogroup B strain MC58.</title>
        <authorList>
            <person name="Tettelin H."/>
            <person name="Saunders N.J."/>
            <person name="Heidelberg J.F."/>
            <person name="Jeffries A.C."/>
            <person name="Nelson K.E."/>
            <person name="Eisen J.A."/>
            <person name="Ketchum K.A."/>
            <person name="Hood D.W."/>
            <person name="Peden J.F."/>
            <person name="Dodson R.J."/>
            <person name="Nelson W.C."/>
            <person name="Gwinn M.L."/>
            <person name="DeBoy R.T."/>
            <person name="Peterson J.D."/>
            <person name="Hickey E.K."/>
            <person name="Haft D.H."/>
            <person name="Salzberg S.L."/>
            <person name="White O."/>
            <person name="Fleischmann R.D."/>
            <person name="Dougherty B.A."/>
            <person name="Mason T.M."/>
            <person name="Ciecko A."/>
            <person name="Parksey D.S."/>
            <person name="Blair E."/>
            <person name="Cittone H."/>
            <person name="Clark E.B."/>
            <person name="Cotton M.D."/>
            <person name="Utterback T.R."/>
            <person name="Khouri H.M."/>
            <person name="Qin H."/>
            <person name="Vamathevan J.J."/>
            <person name="Gill J."/>
            <person name="Scarlato V."/>
            <person name="Masignani V."/>
            <person name="Pizza M."/>
            <person name="Grandi G."/>
            <person name="Sun L."/>
            <person name="Smith H.O."/>
            <person name="Fraser C.M."/>
            <person name="Moxon E.R."/>
            <person name="Rappuoli R."/>
            <person name="Venter J.C."/>
        </authorList>
    </citation>
    <scope>NUCLEOTIDE SEQUENCE [LARGE SCALE GENOMIC DNA]</scope>
    <source>
        <strain>ATCC BAA-335 / MC58</strain>
    </source>
</reference>
<keyword id="KW-1185">Reference proteome</keyword>
<evidence type="ECO:0000255" key="1">
    <source>
        <dbReference type="PROSITE-ProRule" id="PRU00977"/>
    </source>
</evidence>
<evidence type="ECO:0000305" key="2"/>
<comment type="similarity">
    <text evidence="2">Belongs to the UPF0213 family.</text>
</comment>
<protein>
    <recommendedName>
        <fullName>UPF0213 protein NMB0361</fullName>
    </recommendedName>
</protein>
<feature type="chain" id="PRO_0000161371" description="UPF0213 protein NMB0361">
    <location>
        <begin position="1"/>
        <end position="91"/>
    </location>
</feature>
<feature type="domain" description="GIY-YIG" evidence="1">
    <location>
        <begin position="4"/>
        <end position="83"/>
    </location>
</feature>
<dbReference type="EMBL" id="AE002098">
    <property type="protein sequence ID" value="AAF40804.1"/>
    <property type="molecule type" value="Genomic_DNA"/>
</dbReference>
<dbReference type="PIR" id="H81208">
    <property type="entry name" value="H81208"/>
</dbReference>
<dbReference type="RefSeq" id="NP_273410.1">
    <property type="nucleotide sequence ID" value="NC_003112.2"/>
</dbReference>
<dbReference type="RefSeq" id="WP_002218732.1">
    <property type="nucleotide sequence ID" value="NC_003112.2"/>
</dbReference>
<dbReference type="SMR" id="Q9K132"/>
<dbReference type="FunCoup" id="Q9K132">
    <property type="interactions" value="57"/>
</dbReference>
<dbReference type="STRING" id="122586.NMB0361"/>
<dbReference type="PaxDb" id="122586-NMB0361"/>
<dbReference type="KEGG" id="nme:NMB0361"/>
<dbReference type="PATRIC" id="fig|122586.8.peg.457"/>
<dbReference type="HOGENOM" id="CLU_135650_0_2_4"/>
<dbReference type="InParanoid" id="Q9K132"/>
<dbReference type="OrthoDB" id="9797095at2"/>
<dbReference type="Proteomes" id="UP000000425">
    <property type="component" value="Chromosome"/>
</dbReference>
<dbReference type="CDD" id="cd10456">
    <property type="entry name" value="GIY-YIG_UPF0213"/>
    <property type="match status" value="1"/>
</dbReference>
<dbReference type="Gene3D" id="3.40.1440.10">
    <property type="entry name" value="GIY-YIG endonuclease"/>
    <property type="match status" value="1"/>
</dbReference>
<dbReference type="InterPro" id="IPR000305">
    <property type="entry name" value="GIY-YIG_endonuc"/>
</dbReference>
<dbReference type="InterPro" id="IPR035901">
    <property type="entry name" value="GIY-YIG_endonuc_sf"/>
</dbReference>
<dbReference type="InterPro" id="IPR050190">
    <property type="entry name" value="UPF0213_domain"/>
</dbReference>
<dbReference type="PANTHER" id="PTHR34477">
    <property type="entry name" value="UPF0213 PROTEIN YHBQ"/>
    <property type="match status" value="1"/>
</dbReference>
<dbReference type="PANTHER" id="PTHR34477:SF1">
    <property type="entry name" value="UPF0213 PROTEIN YHBQ"/>
    <property type="match status" value="1"/>
</dbReference>
<dbReference type="Pfam" id="PF01541">
    <property type="entry name" value="GIY-YIG"/>
    <property type="match status" value="1"/>
</dbReference>
<dbReference type="SUPFAM" id="SSF82771">
    <property type="entry name" value="GIY-YIG endonuclease"/>
    <property type="match status" value="1"/>
</dbReference>
<dbReference type="PROSITE" id="PS50164">
    <property type="entry name" value="GIY_YIG"/>
    <property type="match status" value="1"/>
</dbReference>
<name>Y361_NEIMB</name>
<gene>
    <name type="ordered locus">NMB0361</name>
</gene>
<sequence>MNASNWSVYLILCENSAFYCGISPNPQQRLAAHTTGKGAKYTRVFKPVAMRIVAGGMDKGTALRQEIAVKKLTAAQKRQLWEQAEKMPSET</sequence>
<proteinExistence type="inferred from homology"/>
<accession>Q9K132</accession>